<proteinExistence type="evidence at protein level"/>
<accession>Q6E263</accession>
<accession>Q6E264</accession>
<accession>Q9M849</accession>
<accession>Q9M8Z3</accession>
<feature type="signal peptide" evidence="2">
    <location>
        <begin position="1"/>
        <end position="26"/>
    </location>
</feature>
<feature type="chain" id="PRO_0000296167" description="Plasmodesmata-located protein 4">
    <location>
        <begin position="27"/>
        <end position="319"/>
    </location>
</feature>
<feature type="topological domain" description="Extracellular" evidence="1">
    <location>
        <begin position="27"/>
        <end position="288"/>
    </location>
</feature>
<feature type="transmembrane region" description="Helical" evidence="2">
    <location>
        <begin position="289"/>
        <end position="309"/>
    </location>
</feature>
<feature type="topological domain" description="Cytoplasmic" evidence="1">
    <location>
        <begin position="310"/>
        <end position="319"/>
    </location>
</feature>
<feature type="domain" description="Gnk2-homologous 1" evidence="3">
    <location>
        <begin position="45"/>
        <end position="149"/>
    </location>
</feature>
<feature type="domain" description="Gnk2-homologous 2" evidence="3">
    <location>
        <begin position="170"/>
        <end position="269"/>
    </location>
</feature>
<feature type="region of interest" description="Necessary and sufficient for plasmodesmal targeting" evidence="1">
    <location>
        <begin position="289"/>
        <end position="309"/>
    </location>
</feature>
<feature type="disulfide bond" evidence="3">
    <location>
        <begin position="39"/>
        <end position="127"/>
    </location>
</feature>
<feature type="disulfide bond" evidence="3">
    <location>
        <begin position="103"/>
        <end position="112"/>
    </location>
</feature>
<feature type="disulfide bond" evidence="3">
    <location>
        <begin position="115"/>
        <end position="140"/>
    </location>
</feature>
<feature type="disulfide bond" evidence="3">
    <location>
        <begin position="177"/>
        <end position="247"/>
    </location>
</feature>
<feature type="disulfide bond" evidence="3">
    <location>
        <begin position="223"/>
        <end position="232"/>
    </location>
</feature>
<feature type="disulfide bond" evidence="3">
    <location>
        <begin position="235"/>
        <end position="260"/>
    </location>
</feature>
<feature type="splice variant" id="VSP_027132" description="In isoform 2." evidence="8">
    <original>QV</original>
    <variation>L</variation>
    <location>
        <begin position="155"/>
        <end position="156"/>
    </location>
</feature>
<gene>
    <name evidence="7" type="primary">PDLP4</name>
    <name evidence="6" type="synonym">CRRSP39</name>
    <name type="ordered locus">At3g04370</name>
    <name type="ORF">T27C4.1</name>
    <name type="ORF">T6K12.1</name>
</gene>
<protein>
    <recommendedName>
        <fullName>Plasmodesmata-located protein 4</fullName>
        <shortName evidence="7">PD-located protein 4</shortName>
    </recommendedName>
    <alternativeName>
        <fullName evidence="6">Cysteine-rich repeat secretory protein 39</fullName>
    </alternativeName>
</protein>
<name>PDLP4_ARATH</name>
<reference key="1">
    <citation type="journal article" date="2000" name="Nature">
        <title>Sequence and analysis of chromosome 3 of the plant Arabidopsis thaliana.</title>
        <authorList>
            <person name="Salanoubat M."/>
            <person name="Lemcke K."/>
            <person name="Rieger M."/>
            <person name="Ansorge W."/>
            <person name="Unseld M."/>
            <person name="Fartmann B."/>
            <person name="Valle G."/>
            <person name="Bloecker H."/>
            <person name="Perez-Alonso M."/>
            <person name="Obermaier B."/>
            <person name="Delseny M."/>
            <person name="Boutry M."/>
            <person name="Grivell L.A."/>
            <person name="Mache R."/>
            <person name="Puigdomenech P."/>
            <person name="De Simone V."/>
            <person name="Choisne N."/>
            <person name="Artiguenave F."/>
            <person name="Robert C."/>
            <person name="Brottier P."/>
            <person name="Wincker P."/>
            <person name="Cattolico L."/>
            <person name="Weissenbach J."/>
            <person name="Saurin W."/>
            <person name="Quetier F."/>
            <person name="Schaefer M."/>
            <person name="Mueller-Auer S."/>
            <person name="Gabel C."/>
            <person name="Fuchs M."/>
            <person name="Benes V."/>
            <person name="Wurmbach E."/>
            <person name="Drzonek H."/>
            <person name="Erfle H."/>
            <person name="Jordan N."/>
            <person name="Bangert S."/>
            <person name="Wiedelmann R."/>
            <person name="Kranz H."/>
            <person name="Voss H."/>
            <person name="Holland R."/>
            <person name="Brandt P."/>
            <person name="Nyakatura G."/>
            <person name="Vezzi A."/>
            <person name="D'Angelo M."/>
            <person name="Pallavicini A."/>
            <person name="Toppo S."/>
            <person name="Simionati B."/>
            <person name="Conrad A."/>
            <person name="Hornischer K."/>
            <person name="Kauer G."/>
            <person name="Loehnert T.-H."/>
            <person name="Nordsiek G."/>
            <person name="Reichelt J."/>
            <person name="Scharfe M."/>
            <person name="Schoen O."/>
            <person name="Bargues M."/>
            <person name="Terol J."/>
            <person name="Climent J."/>
            <person name="Navarro P."/>
            <person name="Collado C."/>
            <person name="Perez-Perez A."/>
            <person name="Ottenwaelder B."/>
            <person name="Duchemin D."/>
            <person name="Cooke R."/>
            <person name="Laudie M."/>
            <person name="Berger-Llauro C."/>
            <person name="Purnelle B."/>
            <person name="Masuy D."/>
            <person name="de Haan M."/>
            <person name="Maarse A.C."/>
            <person name="Alcaraz J.-P."/>
            <person name="Cottet A."/>
            <person name="Casacuberta E."/>
            <person name="Monfort A."/>
            <person name="Argiriou A."/>
            <person name="Flores M."/>
            <person name="Liguori R."/>
            <person name="Vitale D."/>
            <person name="Mannhaupt G."/>
            <person name="Haase D."/>
            <person name="Schoof H."/>
            <person name="Rudd S."/>
            <person name="Zaccaria P."/>
            <person name="Mewes H.-W."/>
            <person name="Mayer K.F.X."/>
            <person name="Kaul S."/>
            <person name="Town C.D."/>
            <person name="Koo H.L."/>
            <person name="Tallon L.J."/>
            <person name="Jenkins J."/>
            <person name="Rooney T."/>
            <person name="Rizzo M."/>
            <person name="Walts A."/>
            <person name="Utterback T."/>
            <person name="Fujii C.Y."/>
            <person name="Shea T.P."/>
            <person name="Creasy T.H."/>
            <person name="Haas B."/>
            <person name="Maiti R."/>
            <person name="Wu D."/>
            <person name="Peterson J."/>
            <person name="Van Aken S."/>
            <person name="Pai G."/>
            <person name="Militscher J."/>
            <person name="Sellers P."/>
            <person name="Gill J.E."/>
            <person name="Feldblyum T.V."/>
            <person name="Preuss D."/>
            <person name="Lin X."/>
            <person name="Nierman W.C."/>
            <person name="Salzberg S.L."/>
            <person name="White O."/>
            <person name="Venter J.C."/>
            <person name="Fraser C.M."/>
            <person name="Kaneko T."/>
            <person name="Nakamura Y."/>
            <person name="Sato S."/>
            <person name="Kato T."/>
            <person name="Asamizu E."/>
            <person name="Sasamoto S."/>
            <person name="Kimura T."/>
            <person name="Idesawa K."/>
            <person name="Kawashima K."/>
            <person name="Kishida Y."/>
            <person name="Kiyokawa C."/>
            <person name="Kohara M."/>
            <person name="Matsumoto M."/>
            <person name="Matsuno A."/>
            <person name="Muraki A."/>
            <person name="Nakayama S."/>
            <person name="Nakazaki N."/>
            <person name="Shinpo S."/>
            <person name="Takeuchi C."/>
            <person name="Wada T."/>
            <person name="Watanabe A."/>
            <person name="Yamada M."/>
            <person name="Yasuda M."/>
            <person name="Tabata S."/>
        </authorList>
    </citation>
    <scope>NUCLEOTIDE SEQUENCE [LARGE SCALE GENOMIC DNA]</scope>
    <source>
        <strain>cv. Columbia</strain>
    </source>
</reference>
<reference key="2">
    <citation type="journal article" date="2017" name="Plant J.">
        <title>Araport11: a complete reannotation of the Arabidopsis thaliana reference genome.</title>
        <authorList>
            <person name="Cheng C.Y."/>
            <person name="Krishnakumar V."/>
            <person name="Chan A.P."/>
            <person name="Thibaud-Nissen F."/>
            <person name="Schobel S."/>
            <person name="Town C.D."/>
        </authorList>
    </citation>
    <scope>GENOME REANNOTATION</scope>
    <source>
        <strain>cv. Columbia</strain>
    </source>
</reference>
<reference key="3">
    <citation type="submission" date="2004-04" db="EMBL/GenBank/DDBJ databases">
        <title>Reconstruction of cDNA sequences for hypothetical genes in Arabidopsis thaliana from 5' and 3' RACE products.</title>
        <authorList>
            <person name="Xiao Y.-L."/>
            <person name="Underwood B.A."/>
            <person name="Moskal W.A. Jr."/>
            <person name="Wang W."/>
            <person name="Redman J.C."/>
            <person name="Wu H.C."/>
            <person name="Utterback T."/>
            <person name="Town C.D."/>
        </authorList>
    </citation>
    <scope>NUCLEOTIDE SEQUENCE [LARGE SCALE MRNA] (ISOFORMS 1 AND 2)</scope>
    <source>
        <strain>cv. Columbia</strain>
    </source>
</reference>
<reference key="4">
    <citation type="submission" date="2004-10" db="EMBL/GenBank/DDBJ databases">
        <authorList>
            <person name="Underwood B.A."/>
            <person name="Xiao Y.-L."/>
            <person name="Moskal W.A. Jr."/>
            <person name="Monaghan E.L."/>
            <person name="Wang W."/>
            <person name="Redman J.C."/>
            <person name="Wu H.C."/>
            <person name="Utterback T."/>
            <person name="Town C.D."/>
        </authorList>
    </citation>
    <scope>NUCLEOTIDE SEQUENCE [LARGE SCALE MRNA] (ISOFORM 1)</scope>
    <source>
        <strain>cv. Columbia</strain>
    </source>
</reference>
<reference key="5">
    <citation type="journal article" date="2001" name="Plant Physiol.">
        <title>A superfamily of proteins with novel cysteine-rich repeats.</title>
        <authorList>
            <person name="Chen Z."/>
        </authorList>
    </citation>
    <scope>GENE FAMILY ORGANIZATION</scope>
    <scope>NOMENCLATURE</scope>
    <scope>CAUTION</scope>
</reference>
<reference key="6">
    <citation type="journal article" date="2008" name="Plant Signal. Behav.">
        <title>Symplastic domains in the Arabidopsis shoot apical meristem correlate with PDLP1 expression patterns.</title>
        <authorList>
            <person name="Bayer E."/>
            <person name="Thomas C."/>
            <person name="Maule A."/>
        </authorList>
    </citation>
    <scope>TISSUE SPECIFICITY</scope>
</reference>
<reference key="7">
    <citation type="journal article" date="2010" name="PLoS Pathog.">
        <title>A family of plasmodesmal proteins with receptor-like properties for plant viral movement proteins.</title>
        <authorList>
            <person name="Amari K."/>
            <person name="Boutant E."/>
            <person name="Hofmann C."/>
            <person name="Schmitt-Keichinger C."/>
            <person name="Fernandez-Calvino L."/>
            <person name="Didier P."/>
            <person name="Lerich A."/>
            <person name="Mutterer J."/>
            <person name="Thomas C.L."/>
            <person name="Heinlein M."/>
            <person name="Mely Y."/>
            <person name="Maule A.J."/>
            <person name="Ritzenthaler C."/>
        </authorList>
    </citation>
    <scope>SUBCELLULAR LOCATION</scope>
    <scope>INTERACTION WITH GRAPEVINE FANLEAF VIRUS 2B-MP PROTEIN</scope>
    <source>
        <strain>cv. Columbia</strain>
    </source>
</reference>
<organism>
    <name type="scientific">Arabidopsis thaliana</name>
    <name type="common">Mouse-ear cress</name>
    <dbReference type="NCBI Taxonomy" id="3702"/>
    <lineage>
        <taxon>Eukaryota</taxon>
        <taxon>Viridiplantae</taxon>
        <taxon>Streptophyta</taxon>
        <taxon>Embryophyta</taxon>
        <taxon>Tracheophyta</taxon>
        <taxon>Spermatophyta</taxon>
        <taxon>Magnoliopsida</taxon>
        <taxon>eudicotyledons</taxon>
        <taxon>Gunneridae</taxon>
        <taxon>Pentapetalae</taxon>
        <taxon>rosids</taxon>
        <taxon>malvids</taxon>
        <taxon>Brassicales</taxon>
        <taxon>Brassicaceae</taxon>
        <taxon>Camelineae</taxon>
        <taxon>Arabidopsis</taxon>
    </lineage>
</organism>
<evidence type="ECO:0000250" key="1">
    <source>
        <dbReference type="UniProtKB" id="Q8GXV7"/>
    </source>
</evidence>
<evidence type="ECO:0000255" key="2"/>
<evidence type="ECO:0000255" key="3">
    <source>
        <dbReference type="PROSITE-ProRule" id="PRU00806"/>
    </source>
</evidence>
<evidence type="ECO:0000269" key="4">
    <source>
    </source>
</evidence>
<evidence type="ECO:0000269" key="5">
    <source>
    </source>
</evidence>
<evidence type="ECO:0000303" key="6">
    <source>
    </source>
</evidence>
<evidence type="ECO:0000303" key="7">
    <source>
    </source>
</evidence>
<evidence type="ECO:0000303" key="8">
    <source ref="3"/>
</evidence>
<evidence type="ECO:0000305" key="9"/>
<evidence type="ECO:0000305" key="10">
    <source>
    </source>
</evidence>
<sequence>MVVHLISLLTQTLALIILSLPSIINTSQLDYDTLVFKQCDPLDANILQKATTKSPNYSNQNLFLRAQALSSFLRKLESESSRSKFLKTLVGNEKHAVSGWFQCREDYPSEICHKCVGDLREISSRSCGNATSARIHLRGCHLIYKFERIDTPGAQVNNHHKYKLFETPEHGLIHKICDGATAETFPGFEEMRTEALTAAETGVVDGHGFYEDSYKLLHVVAQCDGHVEACDCGECISSAAAAAAEECRWSIAGQIYLEGCHVGYTYHPHELPNDSYHEEGSKVNTGKSLAIVVGGVAALVFVAIFFMFLKSLRKKGDDC</sequence>
<comment type="function">
    <text evidence="1">Modulates cell-to-cell trafficking.</text>
</comment>
<comment type="subunit">
    <text evidence="10">(Microbial infection) Interacts with Grapevine fanleaf virus (GFLV) 2B-MP.</text>
</comment>
<comment type="subcellular location">
    <subcellularLocation>
        <location evidence="1">Cell membrane</location>
        <topology evidence="1">Single-pass type I membrane protein</topology>
    </subcellularLocation>
    <subcellularLocation>
        <location evidence="5">Cell junction</location>
        <location evidence="5">Plasmodesma</location>
    </subcellularLocation>
    <text evidence="5">Co-localizes with the Grapevine fanleaf virus (GFLV) 2B-MP at the base of tubules within modified plasmodesmata.</text>
</comment>
<comment type="alternative products">
    <event type="alternative splicing"/>
    <isoform>
        <id>Q6E263-1</id>
        <name>1</name>
        <sequence type="displayed"/>
    </isoform>
    <isoform>
        <id>Q6E263-2</id>
        <name>2</name>
        <sequence type="described" ref="VSP_027132"/>
    </isoform>
</comment>
<comment type="tissue specificity">
    <text evidence="4">Highly expressed in seeds and roots.</text>
</comment>
<comment type="miscellaneous">
    <molecule>Isoform 2</molecule>
    <text evidence="9">May be due to a competing acceptor splice site.</text>
</comment>
<comment type="similarity">
    <text evidence="9">Belongs to the cysteine-rich repeat secretory protein family. Plasmodesmata-located proteins (PDLD) subfamily.</text>
</comment>
<comment type="caution">
    <text evidence="9">PDLPs were initially named Cysteine-rich secretory proteins based on a classification work that failed to predict the transmembrane region at the C-terminus (PubMed:11402176). However, it was later shown that PDLPs are membrane proteins.</text>
</comment>
<comment type="sequence caution" evidence="9">
    <conflict type="erroneous gene model prediction">
        <sequence resource="EMBL-CDS" id="AAF26777"/>
    </conflict>
</comment>
<comment type="sequence caution" evidence="9">
    <conflict type="erroneous gene model prediction">
        <sequence resource="EMBL-CDS" id="AAF63768"/>
    </conflict>
</comment>
<comment type="sequence caution" evidence="9">
    <conflict type="frameshift">
        <sequence resource="EMBL-CDS" id="AAT68358"/>
    </conflict>
</comment>
<comment type="sequence caution" evidence="9">
    <conflict type="frameshift">
        <sequence resource="EMBL-CDS" id="AAT68359"/>
    </conflict>
</comment>
<comment type="sequence caution" evidence="9">
    <conflict type="frameshift">
        <sequence resource="EMBL-CDS" id="AAV63901"/>
    </conflict>
</comment>
<dbReference type="EMBL" id="AC016829">
    <property type="protein sequence ID" value="AAF26777.1"/>
    <property type="status" value="ALT_SEQ"/>
    <property type="molecule type" value="Genomic_DNA"/>
</dbReference>
<dbReference type="EMBL" id="AC022287">
    <property type="protein sequence ID" value="AAF63768.1"/>
    <property type="status" value="ALT_SEQ"/>
    <property type="molecule type" value="Genomic_DNA"/>
</dbReference>
<dbReference type="EMBL" id="CP002686">
    <property type="protein sequence ID" value="AEE74071.1"/>
    <property type="molecule type" value="Genomic_DNA"/>
</dbReference>
<dbReference type="EMBL" id="CP002686">
    <property type="protein sequence ID" value="AEE74072.1"/>
    <property type="molecule type" value="Genomic_DNA"/>
</dbReference>
<dbReference type="EMBL" id="AY600559">
    <property type="protein sequence ID" value="AAT68358.1"/>
    <property type="status" value="ALT_FRAME"/>
    <property type="molecule type" value="mRNA"/>
</dbReference>
<dbReference type="EMBL" id="AY600560">
    <property type="protein sequence ID" value="AAT68359.1"/>
    <property type="status" value="ALT_FRAME"/>
    <property type="molecule type" value="mRNA"/>
</dbReference>
<dbReference type="EMBL" id="AY773872">
    <property type="protein sequence ID" value="AAV63901.1"/>
    <property type="status" value="ALT_FRAME"/>
    <property type="molecule type" value="mRNA"/>
</dbReference>
<dbReference type="RefSeq" id="NP_001030631.1">
    <molecule id="Q6E263-2"/>
    <property type="nucleotide sequence ID" value="NM_001035554.2"/>
</dbReference>
<dbReference type="RefSeq" id="NP_187087.2">
    <molecule id="Q6E263-1"/>
    <property type="nucleotide sequence ID" value="NM_111308.3"/>
</dbReference>
<dbReference type="SMR" id="Q6E263"/>
<dbReference type="STRING" id="3702.Q6E263"/>
<dbReference type="TCDB" id="1.I.2.1.1">
    <property type="family name" value="the plant plasmodesmata (ppd) family"/>
</dbReference>
<dbReference type="PaxDb" id="3702-AT3G04370.1"/>
<dbReference type="ProteomicsDB" id="220419">
    <molecule id="Q6E263-1"/>
</dbReference>
<dbReference type="EnsemblPlants" id="AT3G04370.1">
    <molecule id="Q6E263-1"/>
    <property type="protein sequence ID" value="AT3G04370.1"/>
    <property type="gene ID" value="AT3G04370"/>
</dbReference>
<dbReference type="EnsemblPlants" id="AT3G04370.2">
    <molecule id="Q6E263-2"/>
    <property type="protein sequence ID" value="AT3G04370.2"/>
    <property type="gene ID" value="AT3G04370"/>
</dbReference>
<dbReference type="GeneID" id="819592"/>
<dbReference type="Gramene" id="AT3G04370.1">
    <molecule id="Q6E263-1"/>
    <property type="protein sequence ID" value="AT3G04370.1"/>
    <property type="gene ID" value="AT3G04370"/>
</dbReference>
<dbReference type="Gramene" id="AT3G04370.2">
    <molecule id="Q6E263-2"/>
    <property type="protein sequence ID" value="AT3G04370.2"/>
    <property type="gene ID" value="AT3G04370"/>
</dbReference>
<dbReference type="KEGG" id="ath:AT3G04370"/>
<dbReference type="Araport" id="AT3G04370"/>
<dbReference type="TAIR" id="AT3G04370">
    <property type="gene designation" value="PDLP4"/>
</dbReference>
<dbReference type="eggNOG" id="ENOG502R85K">
    <property type="taxonomic scope" value="Eukaryota"/>
</dbReference>
<dbReference type="InParanoid" id="Q6E263"/>
<dbReference type="OMA" id="IAHDECA"/>
<dbReference type="PhylomeDB" id="Q6E263"/>
<dbReference type="PRO" id="PR:Q6E263"/>
<dbReference type="Proteomes" id="UP000006548">
    <property type="component" value="Chromosome 3"/>
</dbReference>
<dbReference type="ExpressionAtlas" id="Q6E263">
    <property type="expression patterns" value="baseline and differential"/>
</dbReference>
<dbReference type="GO" id="GO:0005886">
    <property type="term" value="C:plasma membrane"/>
    <property type="evidence" value="ECO:0007669"/>
    <property type="project" value="UniProtKB-SubCell"/>
</dbReference>
<dbReference type="GO" id="GO:0009506">
    <property type="term" value="C:plasmodesma"/>
    <property type="evidence" value="ECO:0000314"/>
    <property type="project" value="TAIR"/>
</dbReference>
<dbReference type="CDD" id="cd23509">
    <property type="entry name" value="Gnk2-like"/>
    <property type="match status" value="2"/>
</dbReference>
<dbReference type="Gene3D" id="3.30.430.20">
    <property type="entry name" value="Gnk2 domain, C-X8-C-X2-C motif"/>
    <property type="match status" value="2"/>
</dbReference>
<dbReference type="InterPro" id="IPR051378">
    <property type="entry name" value="Cell2Cell_Antifungal"/>
</dbReference>
<dbReference type="InterPro" id="IPR002902">
    <property type="entry name" value="GNK2"/>
</dbReference>
<dbReference type="InterPro" id="IPR038408">
    <property type="entry name" value="GNK2_sf"/>
</dbReference>
<dbReference type="PANTHER" id="PTHR32080">
    <property type="entry name" value="ANTIFUNGAL PROTEIN GINKBILOBIN-2-LIKE"/>
    <property type="match status" value="1"/>
</dbReference>
<dbReference type="PANTHER" id="PTHR32080:SF6">
    <property type="entry name" value="PLASMODESMATA-LOCATED PROTEIN 4"/>
    <property type="match status" value="1"/>
</dbReference>
<dbReference type="Pfam" id="PF01657">
    <property type="entry name" value="Stress-antifung"/>
    <property type="match status" value="2"/>
</dbReference>
<dbReference type="PROSITE" id="PS51473">
    <property type="entry name" value="GNK2"/>
    <property type="match status" value="2"/>
</dbReference>
<keyword id="KW-0025">Alternative splicing</keyword>
<keyword id="KW-0965">Cell junction</keyword>
<keyword id="KW-1003">Cell membrane</keyword>
<keyword id="KW-1015">Disulfide bond</keyword>
<keyword id="KW-0945">Host-virus interaction</keyword>
<keyword id="KW-0472">Membrane</keyword>
<keyword id="KW-1185">Reference proteome</keyword>
<keyword id="KW-0677">Repeat</keyword>
<keyword id="KW-0732">Signal</keyword>
<keyword id="KW-0812">Transmembrane</keyword>
<keyword id="KW-1133">Transmembrane helix</keyword>
<keyword id="KW-0813">Transport</keyword>